<gene>
    <name type="primary">ORF64</name>
</gene>
<dbReference type="EMBL" id="M75136">
    <property type="protein sequence ID" value="AAA88168.1"/>
    <property type="molecule type" value="Genomic_DNA"/>
</dbReference>
<dbReference type="PIR" id="A36793">
    <property type="entry name" value="A36793"/>
</dbReference>
<dbReference type="RefSeq" id="NP_041156.1">
    <property type="nucleotide sequence ID" value="NC_001493.2"/>
</dbReference>
<dbReference type="GeneID" id="1488439"/>
<dbReference type="KEGG" id="vg:1488439"/>
<dbReference type="Proteomes" id="UP000007643">
    <property type="component" value="Segment"/>
</dbReference>
<accession>Q00156</accession>
<proteinExistence type="predicted"/>
<reference key="1">
    <citation type="journal article" date="1992" name="Virology">
        <title>Channel catfish virus: a new type of herpesvirus.</title>
        <authorList>
            <person name="Davison A.J."/>
        </authorList>
    </citation>
    <scope>NUCLEOTIDE SEQUENCE [LARGE SCALE GENOMIC DNA]</scope>
</reference>
<protein>
    <recommendedName>
        <fullName>Uncharacterized protein ORF64</fullName>
    </recommendedName>
</protein>
<name>VG64_ICHVA</name>
<organismHost>
    <name type="scientific">Ictaluridae</name>
    <name type="common">bullhead catfishes</name>
    <dbReference type="NCBI Taxonomy" id="7996"/>
</organismHost>
<sequence length="514" mass="58198">MSSPRGASSMSSRSPVNLEPESDSVDSEWVFGKYRLLGALRSATLEGEDLEGGIPQELLNVLVLYEKMKSTKSELSGFVTYLALMTLGIFDFDRSLKRLVDEGVLGMFRFNRMLTRVFFGYATGDDALIEGLLDTWFAFMVLLARFPVIPAQLIDSNFCVLCMYESDHSLATADTRFKTILCDHFTEASVTAGGDPCDSAEVTAVVKKTTQIDLSLDDFHERVARGDNVRELAVKRDTTLTTRKNGSINNFTKALNRARETCAMDRMESSLVEFQKKLREVNNMINRLTNPKNLNIFAAELFNVFVHAHHRRKTIRERLSDGLGDWKGRAAHMLFLTTKLRTAVDKNLLTTIITEFYAAAVPPVYRYNHKYNMHAHRVIFFKHMESIGFTNEGITAFQYQLNQVDLREVVGQDYRSDIIPITTNAENFNRLTELFWVIANICTFIFIHNKTIKLHHGDAPDLNIDELPDGLYLFNGSVGFKHDNGETRSGVWSSERTLDLLDTYDQLLSTGVIG</sequence>
<keyword id="KW-1185">Reference proteome</keyword>
<feature type="chain" id="PRO_0000222142" description="Uncharacterized protein ORF64">
    <location>
        <begin position="1"/>
        <end position="514"/>
    </location>
</feature>
<feature type="region of interest" description="Disordered" evidence="1">
    <location>
        <begin position="1"/>
        <end position="22"/>
    </location>
</feature>
<feature type="compositionally biased region" description="Low complexity" evidence="1">
    <location>
        <begin position="1"/>
        <end position="15"/>
    </location>
</feature>
<organism>
    <name type="scientific">Ictalurid herpesvirus 1 (strain Auburn)</name>
    <name type="common">IcHV-1</name>
    <name type="synonym">Channel catfish herpesvirus</name>
    <dbReference type="NCBI Taxonomy" id="766178"/>
    <lineage>
        <taxon>Viruses</taxon>
        <taxon>Duplodnaviria</taxon>
        <taxon>Heunggongvirae</taxon>
        <taxon>Peploviricota</taxon>
        <taxon>Herviviricetes</taxon>
        <taxon>Herpesvirales</taxon>
        <taxon>Alloherpesviridae</taxon>
        <taxon>Ictavirus</taxon>
        <taxon>Ictavirus ictaluridallo1</taxon>
        <taxon>Ictalurid herpesvirus 1</taxon>
    </lineage>
</organism>
<evidence type="ECO:0000256" key="1">
    <source>
        <dbReference type="SAM" id="MobiDB-lite"/>
    </source>
</evidence>